<gene>
    <name evidence="1" type="primary">rplS</name>
    <name type="ordered locus">JTY_2920</name>
</gene>
<feature type="chain" id="PRO_1000193866" description="Large ribosomal subunit protein bL19">
    <location>
        <begin position="1"/>
        <end position="113"/>
    </location>
</feature>
<protein>
    <recommendedName>
        <fullName evidence="1">Large ribosomal subunit protein bL19</fullName>
    </recommendedName>
    <alternativeName>
        <fullName evidence="2">50S ribosomal protein L19</fullName>
    </alternativeName>
</protein>
<comment type="function">
    <text evidence="1">This protein is located at the 30S-50S ribosomal subunit interface and may play a role in the structure and function of the aminoacyl-tRNA binding site.</text>
</comment>
<comment type="similarity">
    <text evidence="1">Belongs to the bacterial ribosomal protein bL19 family.</text>
</comment>
<evidence type="ECO:0000255" key="1">
    <source>
        <dbReference type="HAMAP-Rule" id="MF_00402"/>
    </source>
</evidence>
<evidence type="ECO:0000305" key="2"/>
<keyword id="KW-0687">Ribonucleoprotein</keyword>
<keyword id="KW-0689">Ribosomal protein</keyword>
<organism>
    <name type="scientific">Mycobacterium bovis (strain BCG / Tokyo 172 / ATCC 35737 / TMC 1019)</name>
    <dbReference type="NCBI Taxonomy" id="561275"/>
    <lineage>
        <taxon>Bacteria</taxon>
        <taxon>Bacillati</taxon>
        <taxon>Actinomycetota</taxon>
        <taxon>Actinomycetes</taxon>
        <taxon>Mycobacteriales</taxon>
        <taxon>Mycobacteriaceae</taxon>
        <taxon>Mycobacterium</taxon>
        <taxon>Mycobacterium tuberculosis complex</taxon>
    </lineage>
</organism>
<sequence length="113" mass="13013">MNRLDFVDKPSLRDDIPAFNPGDTINVHVKVIEGAKERLQVFKGVVIRRQGGGIRETFTVRKESYGVGVERTFPVHSPNIDHIEVVTRGDVRRAKLYYLRELRGKKAKIKEKR</sequence>
<reference key="1">
    <citation type="journal article" date="2009" name="Vaccine">
        <title>Whole genome sequence analysis of Mycobacterium bovis bacillus Calmette-Guerin (BCG) Tokyo 172: a comparative study of BCG vaccine substrains.</title>
        <authorList>
            <person name="Seki M."/>
            <person name="Honda I."/>
            <person name="Fujita I."/>
            <person name="Yano I."/>
            <person name="Yamamoto S."/>
            <person name="Koyama A."/>
        </authorList>
    </citation>
    <scope>NUCLEOTIDE SEQUENCE [LARGE SCALE GENOMIC DNA]</scope>
    <source>
        <strain>BCG / Tokyo 172 / ATCC 35737 / TMC 1019</strain>
    </source>
</reference>
<proteinExistence type="inferred from homology"/>
<name>RL19_MYCBT</name>
<accession>C1AG19</accession>
<dbReference type="EMBL" id="AP010918">
    <property type="protein sequence ID" value="BAH27198.1"/>
    <property type="molecule type" value="Genomic_DNA"/>
</dbReference>
<dbReference type="RefSeq" id="WP_003414717.1">
    <property type="nucleotide sequence ID" value="NZ_CP014566.1"/>
</dbReference>
<dbReference type="SMR" id="C1AG19"/>
<dbReference type="GeneID" id="45426891"/>
<dbReference type="KEGG" id="mbt:JTY_2920"/>
<dbReference type="HOGENOM" id="CLU_103507_2_1_11"/>
<dbReference type="GO" id="GO:0022625">
    <property type="term" value="C:cytosolic large ribosomal subunit"/>
    <property type="evidence" value="ECO:0007669"/>
    <property type="project" value="TreeGrafter"/>
</dbReference>
<dbReference type="GO" id="GO:0003735">
    <property type="term" value="F:structural constituent of ribosome"/>
    <property type="evidence" value="ECO:0007669"/>
    <property type="project" value="InterPro"/>
</dbReference>
<dbReference type="GO" id="GO:0006412">
    <property type="term" value="P:translation"/>
    <property type="evidence" value="ECO:0007669"/>
    <property type="project" value="UniProtKB-UniRule"/>
</dbReference>
<dbReference type="FunFam" id="2.30.30.790:FF:000001">
    <property type="entry name" value="50S ribosomal protein L19"/>
    <property type="match status" value="1"/>
</dbReference>
<dbReference type="Gene3D" id="2.30.30.790">
    <property type="match status" value="1"/>
</dbReference>
<dbReference type="HAMAP" id="MF_00402">
    <property type="entry name" value="Ribosomal_bL19"/>
    <property type="match status" value="1"/>
</dbReference>
<dbReference type="InterPro" id="IPR001857">
    <property type="entry name" value="Ribosomal_bL19"/>
</dbReference>
<dbReference type="InterPro" id="IPR018257">
    <property type="entry name" value="Ribosomal_bL19_CS"/>
</dbReference>
<dbReference type="InterPro" id="IPR038657">
    <property type="entry name" value="Ribosomal_bL19_sf"/>
</dbReference>
<dbReference type="InterPro" id="IPR008991">
    <property type="entry name" value="Translation_prot_SH3-like_sf"/>
</dbReference>
<dbReference type="NCBIfam" id="TIGR01024">
    <property type="entry name" value="rplS_bact"/>
    <property type="match status" value="1"/>
</dbReference>
<dbReference type="PANTHER" id="PTHR15680:SF9">
    <property type="entry name" value="LARGE RIBOSOMAL SUBUNIT PROTEIN BL19M"/>
    <property type="match status" value="1"/>
</dbReference>
<dbReference type="PANTHER" id="PTHR15680">
    <property type="entry name" value="RIBOSOMAL PROTEIN L19"/>
    <property type="match status" value="1"/>
</dbReference>
<dbReference type="Pfam" id="PF01245">
    <property type="entry name" value="Ribosomal_L19"/>
    <property type="match status" value="1"/>
</dbReference>
<dbReference type="PIRSF" id="PIRSF002191">
    <property type="entry name" value="Ribosomal_L19"/>
    <property type="match status" value="1"/>
</dbReference>
<dbReference type="PRINTS" id="PR00061">
    <property type="entry name" value="RIBOSOMALL19"/>
</dbReference>
<dbReference type="SUPFAM" id="SSF50104">
    <property type="entry name" value="Translation proteins SH3-like domain"/>
    <property type="match status" value="1"/>
</dbReference>
<dbReference type="PROSITE" id="PS01015">
    <property type="entry name" value="RIBOSOMAL_L19"/>
    <property type="match status" value="1"/>
</dbReference>